<gene>
    <name evidence="1" type="primary">cysJ</name>
    <name type="ordered locus">YPA_2870</name>
</gene>
<organism>
    <name type="scientific">Yersinia pestis bv. Antiqua (strain Antiqua)</name>
    <dbReference type="NCBI Taxonomy" id="360102"/>
    <lineage>
        <taxon>Bacteria</taxon>
        <taxon>Pseudomonadati</taxon>
        <taxon>Pseudomonadota</taxon>
        <taxon>Gammaproteobacteria</taxon>
        <taxon>Enterobacterales</taxon>
        <taxon>Yersiniaceae</taxon>
        <taxon>Yersinia</taxon>
    </lineage>
</organism>
<proteinExistence type="inferred from homology"/>
<dbReference type="EC" id="1.8.1.2" evidence="1"/>
<dbReference type="EMBL" id="CP000308">
    <property type="protein sequence ID" value="ABG14832.1"/>
    <property type="molecule type" value="Genomic_DNA"/>
</dbReference>
<dbReference type="RefSeq" id="WP_002209381.1">
    <property type="nucleotide sequence ID" value="NZ_CP009906.1"/>
</dbReference>
<dbReference type="SMR" id="Q1C3Z0"/>
<dbReference type="GeneID" id="57975336"/>
<dbReference type="KEGG" id="ypa:YPA_2870"/>
<dbReference type="UniPathway" id="UPA00140">
    <property type="reaction ID" value="UER00207"/>
</dbReference>
<dbReference type="Proteomes" id="UP000001971">
    <property type="component" value="Chromosome"/>
</dbReference>
<dbReference type="GO" id="GO:0005829">
    <property type="term" value="C:cytosol"/>
    <property type="evidence" value="ECO:0007669"/>
    <property type="project" value="TreeGrafter"/>
</dbReference>
<dbReference type="GO" id="GO:0050660">
    <property type="term" value="F:flavin adenine dinucleotide binding"/>
    <property type="evidence" value="ECO:0007669"/>
    <property type="project" value="InterPro"/>
</dbReference>
<dbReference type="GO" id="GO:0010181">
    <property type="term" value="F:FMN binding"/>
    <property type="evidence" value="ECO:0007669"/>
    <property type="project" value="InterPro"/>
</dbReference>
<dbReference type="GO" id="GO:0004783">
    <property type="term" value="F:sulfite reductase (NADPH) activity"/>
    <property type="evidence" value="ECO:0007669"/>
    <property type="project" value="UniProtKB-UniRule"/>
</dbReference>
<dbReference type="GO" id="GO:0019344">
    <property type="term" value="P:cysteine biosynthetic process"/>
    <property type="evidence" value="ECO:0007669"/>
    <property type="project" value="UniProtKB-KW"/>
</dbReference>
<dbReference type="GO" id="GO:0070814">
    <property type="term" value="P:hydrogen sulfide biosynthetic process"/>
    <property type="evidence" value="ECO:0007669"/>
    <property type="project" value="UniProtKB-UniRule"/>
</dbReference>
<dbReference type="GO" id="GO:0000103">
    <property type="term" value="P:sulfate assimilation"/>
    <property type="evidence" value="ECO:0007669"/>
    <property type="project" value="UniProtKB-UniRule"/>
</dbReference>
<dbReference type="CDD" id="cd06199">
    <property type="entry name" value="SiR"/>
    <property type="match status" value="1"/>
</dbReference>
<dbReference type="FunFam" id="3.40.50.80:FF:000001">
    <property type="entry name" value="NADPH--cytochrome P450 reductase 1"/>
    <property type="match status" value="1"/>
</dbReference>
<dbReference type="FunFam" id="1.20.990.10:FF:000004">
    <property type="entry name" value="Sulfite reductase [NADPH] flavoprotein alpha-component"/>
    <property type="match status" value="1"/>
</dbReference>
<dbReference type="FunFam" id="3.40.50.360:FF:000018">
    <property type="entry name" value="Sulfite reductase [NADPH] flavoprotein alpha-component"/>
    <property type="match status" value="1"/>
</dbReference>
<dbReference type="Gene3D" id="3.40.50.360">
    <property type="match status" value="1"/>
</dbReference>
<dbReference type="Gene3D" id="1.20.990.10">
    <property type="entry name" value="NADPH-cytochrome p450 Reductase, Chain A, domain 3"/>
    <property type="match status" value="1"/>
</dbReference>
<dbReference type="Gene3D" id="3.40.50.80">
    <property type="entry name" value="Nucleotide-binding domain of ferredoxin-NADP reductase (FNR) module"/>
    <property type="match status" value="1"/>
</dbReference>
<dbReference type="Gene3D" id="2.40.30.10">
    <property type="entry name" value="Translation factors"/>
    <property type="match status" value="1"/>
</dbReference>
<dbReference type="HAMAP" id="MF_01541">
    <property type="entry name" value="CysJ"/>
    <property type="match status" value="1"/>
</dbReference>
<dbReference type="InterPro" id="IPR010199">
    <property type="entry name" value="CysJ"/>
</dbReference>
<dbReference type="InterPro" id="IPR003097">
    <property type="entry name" value="CysJ-like_FAD-binding"/>
</dbReference>
<dbReference type="InterPro" id="IPR029758">
    <property type="entry name" value="CysJ_Proteobact"/>
</dbReference>
<dbReference type="InterPro" id="IPR017927">
    <property type="entry name" value="FAD-bd_FR_type"/>
</dbReference>
<dbReference type="InterPro" id="IPR001094">
    <property type="entry name" value="Flavdoxin-like"/>
</dbReference>
<dbReference type="InterPro" id="IPR008254">
    <property type="entry name" value="Flavodoxin/NO_synth"/>
</dbReference>
<dbReference type="InterPro" id="IPR001709">
    <property type="entry name" value="Flavoprot_Pyr_Nucl_cyt_Rdtase"/>
</dbReference>
<dbReference type="InterPro" id="IPR029039">
    <property type="entry name" value="Flavoprotein-like_sf"/>
</dbReference>
<dbReference type="InterPro" id="IPR039261">
    <property type="entry name" value="FNR_nucleotide-bd"/>
</dbReference>
<dbReference type="InterPro" id="IPR023173">
    <property type="entry name" value="NADPH_Cyt_P450_Rdtase_alpha"/>
</dbReference>
<dbReference type="InterPro" id="IPR001433">
    <property type="entry name" value="OxRdtase_FAD/NAD-bd"/>
</dbReference>
<dbReference type="InterPro" id="IPR017938">
    <property type="entry name" value="Riboflavin_synthase-like_b-brl"/>
</dbReference>
<dbReference type="NCBIfam" id="TIGR01931">
    <property type="entry name" value="cysJ"/>
    <property type="match status" value="1"/>
</dbReference>
<dbReference type="NCBIfam" id="NF008197">
    <property type="entry name" value="PRK10953.1"/>
    <property type="match status" value="1"/>
</dbReference>
<dbReference type="PANTHER" id="PTHR19384:SF128">
    <property type="entry name" value="NADPH OXIDOREDUCTASE A"/>
    <property type="match status" value="1"/>
</dbReference>
<dbReference type="PANTHER" id="PTHR19384">
    <property type="entry name" value="NITRIC OXIDE SYNTHASE-RELATED"/>
    <property type="match status" value="1"/>
</dbReference>
<dbReference type="Pfam" id="PF00667">
    <property type="entry name" value="FAD_binding_1"/>
    <property type="match status" value="1"/>
</dbReference>
<dbReference type="Pfam" id="PF00258">
    <property type="entry name" value="Flavodoxin_1"/>
    <property type="match status" value="1"/>
</dbReference>
<dbReference type="Pfam" id="PF00175">
    <property type="entry name" value="NAD_binding_1"/>
    <property type="match status" value="1"/>
</dbReference>
<dbReference type="PIRSF" id="PIRSF000207">
    <property type="entry name" value="SiR-FP_CysJ"/>
    <property type="match status" value="1"/>
</dbReference>
<dbReference type="PRINTS" id="PR00369">
    <property type="entry name" value="FLAVODOXIN"/>
</dbReference>
<dbReference type="PRINTS" id="PR00371">
    <property type="entry name" value="FPNCR"/>
</dbReference>
<dbReference type="SUPFAM" id="SSF52343">
    <property type="entry name" value="Ferredoxin reductase-like, C-terminal NADP-linked domain"/>
    <property type="match status" value="1"/>
</dbReference>
<dbReference type="SUPFAM" id="SSF52218">
    <property type="entry name" value="Flavoproteins"/>
    <property type="match status" value="1"/>
</dbReference>
<dbReference type="SUPFAM" id="SSF63380">
    <property type="entry name" value="Riboflavin synthase domain-like"/>
    <property type="match status" value="1"/>
</dbReference>
<dbReference type="PROSITE" id="PS51384">
    <property type="entry name" value="FAD_FR"/>
    <property type="match status" value="1"/>
</dbReference>
<dbReference type="PROSITE" id="PS50902">
    <property type="entry name" value="FLAVODOXIN_LIKE"/>
    <property type="match status" value="1"/>
</dbReference>
<protein>
    <recommendedName>
        <fullName evidence="1">Sulfite reductase [NADPH] flavoprotein alpha-component</fullName>
        <shortName evidence="1">SiR-FP</shortName>
        <ecNumber evidence="1">1.8.1.2</ecNumber>
    </recommendedName>
</protein>
<evidence type="ECO:0000255" key="1">
    <source>
        <dbReference type="HAMAP-Rule" id="MF_01541"/>
    </source>
</evidence>
<evidence type="ECO:0000256" key="2">
    <source>
        <dbReference type="SAM" id="MobiDB-lite"/>
    </source>
</evidence>
<feature type="chain" id="PRO_0000292979" description="Sulfite reductase [NADPH] flavoprotein alpha-component">
    <location>
        <begin position="1"/>
        <end position="606"/>
    </location>
</feature>
<feature type="domain" description="Flavodoxin-like" evidence="1">
    <location>
        <begin position="64"/>
        <end position="202"/>
    </location>
</feature>
<feature type="domain" description="FAD-binding FR-type" evidence="1">
    <location>
        <begin position="241"/>
        <end position="455"/>
    </location>
</feature>
<feature type="region of interest" description="Disordered" evidence="2">
    <location>
        <begin position="212"/>
        <end position="235"/>
    </location>
</feature>
<feature type="compositionally biased region" description="Low complexity" evidence="2">
    <location>
        <begin position="212"/>
        <end position="234"/>
    </location>
</feature>
<feature type="binding site" evidence="1">
    <location>
        <begin position="70"/>
        <end position="75"/>
    </location>
    <ligand>
        <name>FMN</name>
        <dbReference type="ChEBI" id="CHEBI:58210"/>
    </ligand>
</feature>
<feature type="binding site" evidence="1">
    <location>
        <begin position="117"/>
        <end position="120"/>
    </location>
    <ligand>
        <name>FMN</name>
        <dbReference type="ChEBI" id="CHEBI:58210"/>
    </ligand>
</feature>
<feature type="binding site" evidence="1">
    <location>
        <begin position="153"/>
        <end position="162"/>
    </location>
    <ligand>
        <name>FMN</name>
        <dbReference type="ChEBI" id="CHEBI:58210"/>
    </ligand>
</feature>
<feature type="binding site" evidence="1">
    <location>
        <position position="329"/>
    </location>
    <ligand>
        <name>FAD</name>
        <dbReference type="ChEBI" id="CHEBI:57692"/>
    </ligand>
</feature>
<feature type="binding site" evidence="1">
    <location>
        <position position="363"/>
    </location>
    <ligand>
        <name>FAD</name>
        <dbReference type="ChEBI" id="CHEBI:57692"/>
    </ligand>
</feature>
<feature type="binding site" evidence="1">
    <location>
        <begin position="393"/>
        <end position="396"/>
    </location>
    <ligand>
        <name>FAD</name>
        <dbReference type="ChEBI" id="CHEBI:57692"/>
    </ligand>
</feature>
<feature type="binding site" evidence="1">
    <location>
        <begin position="411"/>
        <end position="413"/>
    </location>
    <ligand>
        <name>FAD</name>
        <dbReference type="ChEBI" id="CHEBI:57692"/>
    </ligand>
</feature>
<feature type="binding site" evidence="1">
    <location>
        <position position="417"/>
    </location>
    <ligand>
        <name>FAD</name>
        <dbReference type="ChEBI" id="CHEBI:57692"/>
    </ligand>
</feature>
<feature type="binding site" evidence="1">
    <location>
        <begin position="426"/>
        <end position="429"/>
    </location>
    <ligand>
        <name>FAD</name>
        <dbReference type="ChEBI" id="CHEBI:57692"/>
    </ligand>
</feature>
<feature type="binding site" evidence="1">
    <location>
        <begin position="526"/>
        <end position="527"/>
    </location>
    <ligand>
        <name>NADP(+)</name>
        <dbReference type="ChEBI" id="CHEBI:58349"/>
    </ligand>
</feature>
<feature type="binding site" evidence="1">
    <location>
        <begin position="532"/>
        <end position="536"/>
    </location>
    <ligand>
        <name>NADP(+)</name>
        <dbReference type="ChEBI" id="CHEBI:58349"/>
    </ligand>
</feature>
<feature type="binding site" evidence="1">
    <location>
        <position position="568"/>
    </location>
    <ligand>
        <name>NADP(+)</name>
        <dbReference type="ChEBI" id="CHEBI:58349"/>
    </ligand>
</feature>
<feature type="binding site" evidence="1">
    <location>
        <position position="606"/>
    </location>
    <ligand>
        <name>FAD</name>
        <dbReference type="ChEBI" id="CHEBI:57692"/>
    </ligand>
</feature>
<accession>Q1C3Z0</accession>
<reference key="1">
    <citation type="journal article" date="2006" name="J. Bacteriol.">
        <title>Complete genome sequence of Yersinia pestis strains Antiqua and Nepal516: evidence of gene reduction in an emerging pathogen.</title>
        <authorList>
            <person name="Chain P.S.G."/>
            <person name="Hu P."/>
            <person name="Malfatti S.A."/>
            <person name="Radnedge L."/>
            <person name="Larimer F."/>
            <person name="Vergez L.M."/>
            <person name="Worsham P."/>
            <person name="Chu M.C."/>
            <person name="Andersen G.L."/>
        </authorList>
    </citation>
    <scope>NUCLEOTIDE SEQUENCE [LARGE SCALE GENOMIC DNA]</scope>
    <source>
        <strain>Antiqua</strain>
    </source>
</reference>
<sequence>MTTQAPPTSLLPLSPEQLARLQAAVGEFSPTQMAWLSGYFWGMVNQQPGAVASPAVAAPPPVTVTLISASQTGNARRLAEQLRDDLLAAQLSVNLVNAGDYKFKQIAQERLLVVVASTQGEGEPAEEAVALHKFLFSKKAPKLSETAFAVFGLGDTSYEHFCQAGKDFDSKLAELGAQRLLDRVDADVEYQVQAQQWRQQVVATLQAKVPAQSTAPTQSTTPAAAAITSGGTTTVSPYSKTAPLTAQLSVQQKVTGRNSEKDVRHIEIDLGDSGLRYQPGDALGVWFDNDPALVEELLALLWLKGDEPVSIDGQNMPLAQALLSHLELTQNTTLIVDKYAALSRDETLIALLADKPALQLYAKNTPFVDMVRQAPSDLNADQLVGLLRPLTPRLYSIASSQAETENEVHITVGVVRYDIDGRARSGGASGYLADRLEVDGDIRVFIEHNDNFRLPANPETPVIMIGPGTGIAPFRAFMQQREVDGASGKNWLFFGNPHFTEDFLYQVEWQRYVKEGVLTRIDLAWSRDQAHKIYVQDKLREQGAELWNWIQQGAHIYVCGDANRMAKDVEQVLLDVVALHGAMDAEQADEYLSELRQARRYQRDVY</sequence>
<comment type="function">
    <text evidence="1">Component of the sulfite reductase complex that catalyzes the 6-electron reduction of sulfite to sulfide. This is one of several activities required for the biosynthesis of L-cysteine from sulfate. The flavoprotein component catalyzes the electron flow from NADPH -&gt; FAD -&gt; FMN to the hemoprotein component.</text>
</comment>
<comment type="catalytic activity">
    <reaction evidence="1">
        <text>hydrogen sulfide + 3 NADP(+) + 3 H2O = sulfite + 3 NADPH + 4 H(+)</text>
        <dbReference type="Rhea" id="RHEA:13801"/>
        <dbReference type="ChEBI" id="CHEBI:15377"/>
        <dbReference type="ChEBI" id="CHEBI:15378"/>
        <dbReference type="ChEBI" id="CHEBI:17359"/>
        <dbReference type="ChEBI" id="CHEBI:29919"/>
        <dbReference type="ChEBI" id="CHEBI:57783"/>
        <dbReference type="ChEBI" id="CHEBI:58349"/>
        <dbReference type="EC" id="1.8.1.2"/>
    </reaction>
</comment>
<comment type="cofactor">
    <cofactor evidence="1">
        <name>FAD</name>
        <dbReference type="ChEBI" id="CHEBI:57692"/>
    </cofactor>
    <text evidence="1">Binds 1 FAD per subunit.</text>
</comment>
<comment type="cofactor">
    <cofactor evidence="1">
        <name>FMN</name>
        <dbReference type="ChEBI" id="CHEBI:58210"/>
    </cofactor>
    <text evidence="1">Binds 1 FMN per subunit.</text>
</comment>
<comment type="pathway">
    <text evidence="1">Sulfur metabolism; hydrogen sulfide biosynthesis; hydrogen sulfide from sulfite (NADPH route): step 1/1.</text>
</comment>
<comment type="subunit">
    <text evidence="1">Alpha(8)-beta(8). The alpha component is a flavoprotein, the beta component is a hemoprotein.</text>
</comment>
<comment type="similarity">
    <text evidence="1">Belongs to the NADPH-dependent sulphite reductase flavoprotein subunit CysJ family.</text>
</comment>
<comment type="similarity">
    <text evidence="1">In the N-terminal section; belongs to the flavodoxin family.</text>
</comment>
<comment type="similarity">
    <text evidence="1">In the C-terminal section; belongs to the flavoprotein pyridine nucleotide cytochrome reductase family.</text>
</comment>
<keyword id="KW-0028">Amino-acid biosynthesis</keyword>
<keyword id="KW-0198">Cysteine biosynthesis</keyword>
<keyword id="KW-0249">Electron transport</keyword>
<keyword id="KW-0274">FAD</keyword>
<keyword id="KW-0285">Flavoprotein</keyword>
<keyword id="KW-0288">FMN</keyword>
<keyword id="KW-0521">NADP</keyword>
<keyword id="KW-0560">Oxidoreductase</keyword>
<keyword id="KW-0813">Transport</keyword>
<name>CYSJ_YERPA</name>